<organism>
    <name type="scientific">Streptococcus pneumoniae (strain 70585)</name>
    <dbReference type="NCBI Taxonomy" id="488221"/>
    <lineage>
        <taxon>Bacteria</taxon>
        <taxon>Bacillati</taxon>
        <taxon>Bacillota</taxon>
        <taxon>Bacilli</taxon>
        <taxon>Lactobacillales</taxon>
        <taxon>Streptococcaceae</taxon>
        <taxon>Streptococcus</taxon>
    </lineage>
</organism>
<proteinExistence type="inferred from homology"/>
<gene>
    <name evidence="1" type="primary">murI</name>
    <name type="ordered locus">SP70585_1936</name>
</gene>
<accession>C1C9E7</accession>
<evidence type="ECO:0000255" key="1">
    <source>
        <dbReference type="HAMAP-Rule" id="MF_00258"/>
    </source>
</evidence>
<sequence length="264" mass="29138">MDNRPIGFLDSGVGGLTVVRELMRQLPHEEIVYIGDSARAPYGPRPAEQIREYTWQLVNFLLTKDVKMIVIACNTATAVVWEEIKAQLDIPVLGVILPGASAAIKSSQGGKIGVIGTPMTVQSDIYRQKIHDLDPDLQVESLACPKFAPLVESGALSTSVTKKVVYETLRPLVGKVDSLILGCTHYPLLRPIIQNVMGPKVQLIDSGAECVRDISVLLNYFEINRGRDAGPLHHRFYTTASSQSFAQIGEEWLEKEIHVEHVEL</sequence>
<keyword id="KW-0133">Cell shape</keyword>
<keyword id="KW-0961">Cell wall biogenesis/degradation</keyword>
<keyword id="KW-0413">Isomerase</keyword>
<keyword id="KW-0573">Peptidoglycan synthesis</keyword>
<reference key="1">
    <citation type="journal article" date="2010" name="Genome Biol.">
        <title>Structure and dynamics of the pan-genome of Streptococcus pneumoniae and closely related species.</title>
        <authorList>
            <person name="Donati C."/>
            <person name="Hiller N.L."/>
            <person name="Tettelin H."/>
            <person name="Muzzi A."/>
            <person name="Croucher N.J."/>
            <person name="Angiuoli S.V."/>
            <person name="Oggioni M."/>
            <person name="Dunning Hotopp J.C."/>
            <person name="Hu F.Z."/>
            <person name="Riley D.R."/>
            <person name="Covacci A."/>
            <person name="Mitchell T.J."/>
            <person name="Bentley S.D."/>
            <person name="Kilian M."/>
            <person name="Ehrlich G.D."/>
            <person name="Rappuoli R."/>
            <person name="Moxon E.R."/>
            <person name="Masignani V."/>
        </authorList>
    </citation>
    <scope>NUCLEOTIDE SEQUENCE [LARGE SCALE GENOMIC DNA]</scope>
    <source>
        <strain>70585</strain>
    </source>
</reference>
<name>MURI_STRP7</name>
<protein>
    <recommendedName>
        <fullName evidence="1">Glutamate racemase</fullName>
        <ecNumber evidence="1">5.1.1.3</ecNumber>
    </recommendedName>
</protein>
<dbReference type="EC" id="5.1.1.3" evidence="1"/>
<dbReference type="EMBL" id="CP000918">
    <property type="protein sequence ID" value="ACO15871.1"/>
    <property type="molecule type" value="Genomic_DNA"/>
</dbReference>
<dbReference type="SMR" id="C1C9E7"/>
<dbReference type="KEGG" id="snm:SP70585_1936"/>
<dbReference type="HOGENOM" id="CLU_052344_0_2_9"/>
<dbReference type="UniPathway" id="UPA00219"/>
<dbReference type="Proteomes" id="UP000002211">
    <property type="component" value="Chromosome"/>
</dbReference>
<dbReference type="GO" id="GO:0008881">
    <property type="term" value="F:glutamate racemase activity"/>
    <property type="evidence" value="ECO:0007669"/>
    <property type="project" value="UniProtKB-UniRule"/>
</dbReference>
<dbReference type="GO" id="GO:0071555">
    <property type="term" value="P:cell wall organization"/>
    <property type="evidence" value="ECO:0007669"/>
    <property type="project" value="UniProtKB-KW"/>
</dbReference>
<dbReference type="GO" id="GO:0009252">
    <property type="term" value="P:peptidoglycan biosynthetic process"/>
    <property type="evidence" value="ECO:0007669"/>
    <property type="project" value="UniProtKB-UniRule"/>
</dbReference>
<dbReference type="GO" id="GO:0008360">
    <property type="term" value="P:regulation of cell shape"/>
    <property type="evidence" value="ECO:0007669"/>
    <property type="project" value="UniProtKB-KW"/>
</dbReference>
<dbReference type="FunFam" id="3.40.50.1860:FF:000002">
    <property type="entry name" value="Glutamate racemase"/>
    <property type="match status" value="1"/>
</dbReference>
<dbReference type="Gene3D" id="3.40.50.1860">
    <property type="match status" value="2"/>
</dbReference>
<dbReference type="HAMAP" id="MF_00258">
    <property type="entry name" value="Glu_racemase"/>
    <property type="match status" value="1"/>
</dbReference>
<dbReference type="InterPro" id="IPR015942">
    <property type="entry name" value="Asp/Glu/hydantoin_racemase"/>
</dbReference>
<dbReference type="InterPro" id="IPR001920">
    <property type="entry name" value="Asp/Glu_race"/>
</dbReference>
<dbReference type="InterPro" id="IPR018187">
    <property type="entry name" value="Asp/Glu_racemase_AS_1"/>
</dbReference>
<dbReference type="InterPro" id="IPR033134">
    <property type="entry name" value="Asp/Glu_racemase_AS_2"/>
</dbReference>
<dbReference type="InterPro" id="IPR004391">
    <property type="entry name" value="Glu_race"/>
</dbReference>
<dbReference type="NCBIfam" id="TIGR00067">
    <property type="entry name" value="glut_race"/>
    <property type="match status" value="1"/>
</dbReference>
<dbReference type="NCBIfam" id="NF002035">
    <property type="entry name" value="PRK00865.1-3"/>
    <property type="match status" value="1"/>
</dbReference>
<dbReference type="PANTHER" id="PTHR21198">
    <property type="entry name" value="GLUTAMATE RACEMASE"/>
    <property type="match status" value="1"/>
</dbReference>
<dbReference type="PANTHER" id="PTHR21198:SF2">
    <property type="entry name" value="GLUTAMATE RACEMASE"/>
    <property type="match status" value="1"/>
</dbReference>
<dbReference type="Pfam" id="PF01177">
    <property type="entry name" value="Asp_Glu_race"/>
    <property type="match status" value="1"/>
</dbReference>
<dbReference type="SUPFAM" id="SSF53681">
    <property type="entry name" value="Aspartate/glutamate racemase"/>
    <property type="match status" value="2"/>
</dbReference>
<dbReference type="PROSITE" id="PS00923">
    <property type="entry name" value="ASP_GLU_RACEMASE_1"/>
    <property type="match status" value="1"/>
</dbReference>
<dbReference type="PROSITE" id="PS00924">
    <property type="entry name" value="ASP_GLU_RACEMASE_2"/>
    <property type="match status" value="1"/>
</dbReference>
<feature type="chain" id="PRO_1000125620" description="Glutamate racemase">
    <location>
        <begin position="1"/>
        <end position="264"/>
    </location>
</feature>
<feature type="active site" description="Proton donor/acceptor" evidence="1">
    <location>
        <position position="73"/>
    </location>
</feature>
<feature type="active site" description="Proton donor/acceptor" evidence="1">
    <location>
        <position position="183"/>
    </location>
</feature>
<feature type="binding site" evidence="1">
    <location>
        <begin position="10"/>
        <end position="11"/>
    </location>
    <ligand>
        <name>substrate</name>
    </ligand>
</feature>
<feature type="binding site" evidence="1">
    <location>
        <begin position="42"/>
        <end position="43"/>
    </location>
    <ligand>
        <name>substrate</name>
    </ligand>
</feature>
<feature type="binding site" evidence="1">
    <location>
        <begin position="74"/>
        <end position="75"/>
    </location>
    <ligand>
        <name>substrate</name>
    </ligand>
</feature>
<feature type="binding site" evidence="1">
    <location>
        <begin position="184"/>
        <end position="185"/>
    </location>
    <ligand>
        <name>substrate</name>
    </ligand>
</feature>
<comment type="function">
    <text evidence="1">Provides the (R)-glutamate required for cell wall biosynthesis.</text>
</comment>
<comment type="catalytic activity">
    <reaction evidence="1">
        <text>L-glutamate = D-glutamate</text>
        <dbReference type="Rhea" id="RHEA:12813"/>
        <dbReference type="ChEBI" id="CHEBI:29985"/>
        <dbReference type="ChEBI" id="CHEBI:29986"/>
        <dbReference type="EC" id="5.1.1.3"/>
    </reaction>
</comment>
<comment type="pathway">
    <text evidence="1">Cell wall biogenesis; peptidoglycan biosynthesis.</text>
</comment>
<comment type="similarity">
    <text evidence="1">Belongs to the aspartate/glutamate racemases family.</text>
</comment>